<proteinExistence type="inferred from homology"/>
<protein>
    <recommendedName>
        <fullName evidence="1">Queuine tRNA-ribosyltransferase</fullName>
        <ecNumber evidence="1">2.4.2.29</ecNumber>
    </recommendedName>
    <alternativeName>
        <fullName evidence="1">Guanine insertion enzyme</fullName>
    </alternativeName>
    <alternativeName>
        <fullName evidence="1">tRNA-guanine transglycosylase</fullName>
    </alternativeName>
</protein>
<organism>
    <name type="scientific">Actinobacillus pleuropneumoniae serotype 3 (strain JL03)</name>
    <dbReference type="NCBI Taxonomy" id="434271"/>
    <lineage>
        <taxon>Bacteria</taxon>
        <taxon>Pseudomonadati</taxon>
        <taxon>Pseudomonadota</taxon>
        <taxon>Gammaproteobacteria</taxon>
        <taxon>Pasteurellales</taxon>
        <taxon>Pasteurellaceae</taxon>
        <taxon>Actinobacillus</taxon>
    </lineage>
</organism>
<evidence type="ECO:0000255" key="1">
    <source>
        <dbReference type="HAMAP-Rule" id="MF_00168"/>
    </source>
</evidence>
<sequence length="382" mass="43332">MKYELKTTSGNARRGRLTFSRPKGEYVVETPAFMPVGTYGTVKGMTPEEVAATGAQILLGNTFHLWLRPGQEVMKSHGDLHGFMQWHGPILTDSGGFQVFSLGKLRKIKEEGVTFQNPISGEKIFLSPEKSMEIQYDLGSDIVMIFDECTPYPATFDYAKNSMEMSLRWAKRSRDRFDELQNPRALFGIVQGGTYEELRKISAEGLVDIGFDGYAVGGLAVGEPKEEMHRILEFTTPLLPQDKPRYLMGVGKPEDLVEGVRRGIDMFDCVMPTRNARNGHLFVSNGIVKIRNAKYKTDTTPLDPECDCYTCKNYTKAYLYHLDKCGEILGARLNTIHNLRYYQRLMAQIRQAIEEDRFDDFVVEFYAKIGKEVPPLQSEVNK</sequence>
<name>TGT_ACTPJ</name>
<accession>B0BP03</accession>
<keyword id="KW-0328">Glycosyltransferase</keyword>
<keyword id="KW-0479">Metal-binding</keyword>
<keyword id="KW-0671">Queuosine biosynthesis</keyword>
<keyword id="KW-0808">Transferase</keyword>
<keyword id="KW-0819">tRNA processing</keyword>
<keyword id="KW-0862">Zinc</keyword>
<reference key="1">
    <citation type="journal article" date="2008" name="PLoS ONE">
        <title>Genome biology of Actinobacillus pleuropneumoniae JL03, an isolate of serotype 3 prevalent in China.</title>
        <authorList>
            <person name="Xu Z."/>
            <person name="Zhou Y."/>
            <person name="Li L."/>
            <person name="Zhou R."/>
            <person name="Xiao S."/>
            <person name="Wan Y."/>
            <person name="Zhang S."/>
            <person name="Wang K."/>
            <person name="Li W."/>
            <person name="Li L."/>
            <person name="Jin H."/>
            <person name="Kang M."/>
            <person name="Dalai B."/>
            <person name="Li T."/>
            <person name="Liu L."/>
            <person name="Cheng Y."/>
            <person name="Zhang L."/>
            <person name="Xu T."/>
            <person name="Zheng H."/>
            <person name="Pu S."/>
            <person name="Wang B."/>
            <person name="Gu W."/>
            <person name="Zhang X.L."/>
            <person name="Zhu G.-F."/>
            <person name="Wang S."/>
            <person name="Zhao G.-P."/>
            <person name="Chen H."/>
        </authorList>
    </citation>
    <scope>NUCLEOTIDE SEQUENCE [LARGE SCALE GENOMIC DNA]</scope>
    <source>
        <strain>JL03</strain>
    </source>
</reference>
<feature type="chain" id="PRO_1000097528" description="Queuine tRNA-ribosyltransferase">
    <location>
        <begin position="1"/>
        <end position="382"/>
    </location>
</feature>
<feature type="region of interest" description="RNA binding" evidence="1">
    <location>
        <begin position="249"/>
        <end position="255"/>
    </location>
</feature>
<feature type="region of interest" description="RNA binding; important for wobble base 34 recognition" evidence="1">
    <location>
        <begin position="273"/>
        <end position="277"/>
    </location>
</feature>
<feature type="active site" description="Proton acceptor" evidence="1">
    <location>
        <position position="93"/>
    </location>
</feature>
<feature type="active site" description="Nucleophile" evidence="1">
    <location>
        <position position="268"/>
    </location>
</feature>
<feature type="binding site" evidence="1">
    <location>
        <begin position="93"/>
        <end position="97"/>
    </location>
    <ligand>
        <name>substrate</name>
    </ligand>
</feature>
<feature type="binding site" evidence="1">
    <location>
        <position position="147"/>
    </location>
    <ligand>
        <name>substrate</name>
    </ligand>
</feature>
<feature type="binding site" evidence="1">
    <location>
        <position position="191"/>
    </location>
    <ligand>
        <name>substrate</name>
    </ligand>
</feature>
<feature type="binding site" evidence="1">
    <location>
        <position position="218"/>
    </location>
    <ligand>
        <name>substrate</name>
    </ligand>
</feature>
<feature type="binding site" evidence="1">
    <location>
        <position position="306"/>
    </location>
    <ligand>
        <name>Zn(2+)</name>
        <dbReference type="ChEBI" id="CHEBI:29105"/>
    </ligand>
</feature>
<feature type="binding site" evidence="1">
    <location>
        <position position="308"/>
    </location>
    <ligand>
        <name>Zn(2+)</name>
        <dbReference type="ChEBI" id="CHEBI:29105"/>
    </ligand>
</feature>
<feature type="binding site" evidence="1">
    <location>
        <position position="311"/>
    </location>
    <ligand>
        <name>Zn(2+)</name>
        <dbReference type="ChEBI" id="CHEBI:29105"/>
    </ligand>
</feature>
<feature type="binding site" evidence="1">
    <location>
        <position position="337"/>
    </location>
    <ligand>
        <name>Zn(2+)</name>
        <dbReference type="ChEBI" id="CHEBI:29105"/>
    </ligand>
</feature>
<gene>
    <name evidence="1" type="primary">tgt</name>
    <name type="ordered locus">APJL_0723</name>
</gene>
<comment type="function">
    <text evidence="1">Catalyzes the base-exchange of a guanine (G) residue with the queuine precursor 7-aminomethyl-7-deazaguanine (PreQ1) at position 34 (anticodon wobble position) in tRNAs with GU(N) anticodons (tRNA-Asp, -Asn, -His and -Tyr). Catalysis occurs through a double-displacement mechanism. The nucleophile active site attacks the C1' of nucleotide 34 to detach the guanine base from the RNA, forming a covalent enzyme-RNA intermediate. The proton acceptor active site deprotonates the incoming PreQ1, allowing a nucleophilic attack on the C1' of the ribose to form the product. After dissociation, two additional enzymatic reactions on the tRNA convert PreQ1 to queuine (Q), resulting in the hypermodified nucleoside queuosine (7-(((4,5-cis-dihydroxy-2-cyclopenten-1-yl)amino)methyl)-7-deazaguanosine).</text>
</comment>
<comment type="catalytic activity">
    <reaction evidence="1">
        <text>7-aminomethyl-7-carbaguanine + guanosine(34) in tRNA = 7-aminomethyl-7-carbaguanosine(34) in tRNA + guanine</text>
        <dbReference type="Rhea" id="RHEA:24104"/>
        <dbReference type="Rhea" id="RHEA-COMP:10341"/>
        <dbReference type="Rhea" id="RHEA-COMP:10342"/>
        <dbReference type="ChEBI" id="CHEBI:16235"/>
        <dbReference type="ChEBI" id="CHEBI:58703"/>
        <dbReference type="ChEBI" id="CHEBI:74269"/>
        <dbReference type="ChEBI" id="CHEBI:82833"/>
        <dbReference type="EC" id="2.4.2.29"/>
    </reaction>
</comment>
<comment type="cofactor">
    <cofactor evidence="1">
        <name>Zn(2+)</name>
        <dbReference type="ChEBI" id="CHEBI:29105"/>
    </cofactor>
    <text evidence="1">Binds 1 zinc ion per subunit.</text>
</comment>
<comment type="pathway">
    <text evidence="1">tRNA modification; tRNA-queuosine biosynthesis.</text>
</comment>
<comment type="subunit">
    <text evidence="1">Homodimer. Within each dimer, one monomer is responsible for RNA recognition and catalysis, while the other monomer binds to the replacement base PreQ1.</text>
</comment>
<comment type="similarity">
    <text evidence="1">Belongs to the queuine tRNA-ribosyltransferase family.</text>
</comment>
<dbReference type="EC" id="2.4.2.29" evidence="1"/>
<dbReference type="EMBL" id="CP000687">
    <property type="protein sequence ID" value="ABY69288.1"/>
    <property type="molecule type" value="Genomic_DNA"/>
</dbReference>
<dbReference type="RefSeq" id="WP_005604234.1">
    <property type="nucleotide sequence ID" value="NC_010278.1"/>
</dbReference>
<dbReference type="SMR" id="B0BP03"/>
<dbReference type="KEGG" id="apj:APJL_0723"/>
<dbReference type="HOGENOM" id="CLU_022060_0_1_6"/>
<dbReference type="UniPathway" id="UPA00392"/>
<dbReference type="Proteomes" id="UP000008547">
    <property type="component" value="Chromosome"/>
</dbReference>
<dbReference type="GO" id="GO:0005829">
    <property type="term" value="C:cytosol"/>
    <property type="evidence" value="ECO:0007669"/>
    <property type="project" value="TreeGrafter"/>
</dbReference>
<dbReference type="GO" id="GO:0046872">
    <property type="term" value="F:metal ion binding"/>
    <property type="evidence" value="ECO:0007669"/>
    <property type="project" value="UniProtKB-KW"/>
</dbReference>
<dbReference type="GO" id="GO:0008479">
    <property type="term" value="F:tRNA-guanosine(34) queuine transglycosylase activity"/>
    <property type="evidence" value="ECO:0007669"/>
    <property type="project" value="UniProtKB-UniRule"/>
</dbReference>
<dbReference type="GO" id="GO:0008616">
    <property type="term" value="P:queuosine biosynthetic process"/>
    <property type="evidence" value="ECO:0007669"/>
    <property type="project" value="UniProtKB-UniRule"/>
</dbReference>
<dbReference type="GO" id="GO:0002099">
    <property type="term" value="P:tRNA wobble guanine modification"/>
    <property type="evidence" value="ECO:0007669"/>
    <property type="project" value="TreeGrafter"/>
</dbReference>
<dbReference type="GO" id="GO:0101030">
    <property type="term" value="P:tRNA-guanine transglycosylation"/>
    <property type="evidence" value="ECO:0007669"/>
    <property type="project" value="InterPro"/>
</dbReference>
<dbReference type="FunFam" id="3.20.20.105:FF:000001">
    <property type="entry name" value="Queuine tRNA-ribosyltransferase"/>
    <property type="match status" value="1"/>
</dbReference>
<dbReference type="Gene3D" id="3.20.20.105">
    <property type="entry name" value="Queuine tRNA-ribosyltransferase-like"/>
    <property type="match status" value="1"/>
</dbReference>
<dbReference type="HAMAP" id="MF_00168">
    <property type="entry name" value="Q_tRNA_Tgt"/>
    <property type="match status" value="1"/>
</dbReference>
<dbReference type="InterPro" id="IPR050076">
    <property type="entry name" value="ArchSynthase1/Queuine_TRR"/>
</dbReference>
<dbReference type="InterPro" id="IPR004803">
    <property type="entry name" value="TGT"/>
</dbReference>
<dbReference type="InterPro" id="IPR036511">
    <property type="entry name" value="TGT-like_sf"/>
</dbReference>
<dbReference type="InterPro" id="IPR002616">
    <property type="entry name" value="tRNA_ribo_trans-like"/>
</dbReference>
<dbReference type="NCBIfam" id="TIGR00430">
    <property type="entry name" value="Q_tRNA_tgt"/>
    <property type="match status" value="1"/>
</dbReference>
<dbReference type="NCBIfam" id="TIGR00449">
    <property type="entry name" value="tgt_general"/>
    <property type="match status" value="1"/>
</dbReference>
<dbReference type="PANTHER" id="PTHR46499">
    <property type="entry name" value="QUEUINE TRNA-RIBOSYLTRANSFERASE"/>
    <property type="match status" value="1"/>
</dbReference>
<dbReference type="PANTHER" id="PTHR46499:SF1">
    <property type="entry name" value="QUEUINE TRNA-RIBOSYLTRANSFERASE"/>
    <property type="match status" value="1"/>
</dbReference>
<dbReference type="Pfam" id="PF01702">
    <property type="entry name" value="TGT"/>
    <property type="match status" value="1"/>
</dbReference>
<dbReference type="SUPFAM" id="SSF51713">
    <property type="entry name" value="tRNA-guanine transglycosylase"/>
    <property type="match status" value="1"/>
</dbReference>